<evidence type="ECO:0000250" key="1">
    <source>
        <dbReference type="UniProtKB" id="P00420"/>
    </source>
</evidence>
<evidence type="ECO:0000255" key="2"/>
<evidence type="ECO:0000305" key="3"/>
<dbReference type="EC" id="7.1.1.9"/>
<dbReference type="EMBL" id="X54253">
    <property type="protein sequence ID" value="CAA38169.1"/>
    <property type="molecule type" value="Genomic_DNA"/>
</dbReference>
<dbReference type="PIR" id="S26020">
    <property type="entry name" value="S26020"/>
</dbReference>
<dbReference type="SMR" id="P24879"/>
<dbReference type="CTD" id="4514"/>
<dbReference type="GO" id="GO:0005743">
    <property type="term" value="C:mitochondrial inner membrane"/>
    <property type="evidence" value="ECO:0007669"/>
    <property type="project" value="UniProtKB-SubCell"/>
</dbReference>
<dbReference type="GO" id="GO:0004129">
    <property type="term" value="F:cytochrome-c oxidase activity"/>
    <property type="evidence" value="ECO:0007669"/>
    <property type="project" value="UniProtKB-EC"/>
</dbReference>
<dbReference type="GO" id="GO:0006123">
    <property type="term" value="P:mitochondrial electron transport, cytochrome c to oxygen"/>
    <property type="evidence" value="ECO:0007669"/>
    <property type="project" value="TreeGrafter"/>
</dbReference>
<dbReference type="CDD" id="cd01665">
    <property type="entry name" value="Cyt_c_Oxidase_III"/>
    <property type="match status" value="1"/>
</dbReference>
<dbReference type="Gene3D" id="1.10.287.70">
    <property type="match status" value="1"/>
</dbReference>
<dbReference type="Gene3D" id="1.20.120.80">
    <property type="entry name" value="Cytochrome c oxidase, subunit III, four-helix bundle"/>
    <property type="match status" value="1"/>
</dbReference>
<dbReference type="InterPro" id="IPR024791">
    <property type="entry name" value="Cyt_c/ubiquinol_Oxase_su3"/>
</dbReference>
<dbReference type="InterPro" id="IPR033945">
    <property type="entry name" value="Cyt_c_oxase_su3_dom"/>
</dbReference>
<dbReference type="InterPro" id="IPR000298">
    <property type="entry name" value="Cyt_c_oxidase-like_su3"/>
</dbReference>
<dbReference type="InterPro" id="IPR035973">
    <property type="entry name" value="Cyt_c_oxidase_su3-like_sf"/>
</dbReference>
<dbReference type="InterPro" id="IPR013833">
    <property type="entry name" value="Cyt_c_oxidase_su3_a-hlx"/>
</dbReference>
<dbReference type="PANTHER" id="PTHR11403:SF7">
    <property type="entry name" value="CYTOCHROME C OXIDASE SUBUNIT 3"/>
    <property type="match status" value="1"/>
</dbReference>
<dbReference type="PANTHER" id="PTHR11403">
    <property type="entry name" value="CYTOCHROME C OXIDASE SUBUNIT III"/>
    <property type="match status" value="1"/>
</dbReference>
<dbReference type="Pfam" id="PF00510">
    <property type="entry name" value="COX3"/>
    <property type="match status" value="1"/>
</dbReference>
<dbReference type="SUPFAM" id="SSF81452">
    <property type="entry name" value="Cytochrome c oxidase subunit III-like"/>
    <property type="match status" value="1"/>
</dbReference>
<dbReference type="PROSITE" id="PS50253">
    <property type="entry name" value="COX3"/>
    <property type="match status" value="1"/>
</dbReference>
<comment type="function">
    <text evidence="1">Component of the cytochrome c oxidase, the last enzyme in the mitochondrial electron transport chain which drives oxidative phosphorylation. The respiratory chain contains 3 multisubunit complexes succinate dehydrogenase (complex II, CII), ubiquinol-cytochrome c oxidoreductase (cytochrome b-c1 complex, complex III, CIII) and cytochrome c oxidase (complex IV, CIV), that cooperate to transfer electrons derived from NADH and succinate to molecular oxygen, creating an electrochemical gradient over the inner membrane that drives transmembrane transport and the ATP synthase. Cytochrome c oxidase is the component of the respiratory chain that catalyzes the reduction of oxygen to water. Electrons originating from reduced cytochrome c in the intermembrane space (IMS) are transferred via the dinuclear copper A center (CU(A)) of subunit 2 and heme A of subunit 1 to the active site in subunit 1, a binuclear center (BNC) formed by heme A3 and copper B (CU(B)). The BNC reduces molecular oxygen to 2 water molecules using 4 electrons from cytochrome c in the IMS and 4 protons from the mitochondrial matrix.</text>
</comment>
<comment type="catalytic activity">
    <reaction evidence="1">
        <text>4 Fe(II)-[cytochrome c] + O2 + 8 H(+)(in) = 4 Fe(III)-[cytochrome c] + 2 H2O + 4 H(+)(out)</text>
        <dbReference type="Rhea" id="RHEA:11436"/>
        <dbReference type="Rhea" id="RHEA-COMP:10350"/>
        <dbReference type="Rhea" id="RHEA-COMP:14399"/>
        <dbReference type="ChEBI" id="CHEBI:15377"/>
        <dbReference type="ChEBI" id="CHEBI:15378"/>
        <dbReference type="ChEBI" id="CHEBI:15379"/>
        <dbReference type="ChEBI" id="CHEBI:29033"/>
        <dbReference type="ChEBI" id="CHEBI:29034"/>
        <dbReference type="EC" id="7.1.1.9"/>
    </reaction>
    <physiologicalReaction direction="left-to-right" evidence="1">
        <dbReference type="Rhea" id="RHEA:11437"/>
    </physiologicalReaction>
</comment>
<comment type="subunit">
    <text evidence="1">Component of the cytochrome c oxidase (complex IV, CIV), a multisubunit enzyme composed of a catalytic core of 3 subunits and several supernumerary subunits. The complex exists as a monomer or a dimer and forms supercomplexes (SCs) in the inner mitochondrial membrane with ubiquinol-cytochrome c oxidoreductase (cytochrome b-c1 complex, complex III, CIII).</text>
</comment>
<comment type="subcellular location">
    <subcellularLocation>
        <location evidence="1">Mitochondrion inner membrane</location>
        <topology evidence="1">Multi-pass membrane protein</topology>
    </subcellularLocation>
</comment>
<comment type="similarity">
    <text evidence="3">Belongs to the cytochrome c oxidase subunit 3 family.</text>
</comment>
<accession>P24879</accession>
<geneLocation type="mitochondrion"/>
<proteinExistence type="inferred from homology"/>
<sequence length="255" mass="29094">MFHNFHILSLSSYPILIFCSSLGFTSSLVVFFKNGIFGGLLFCLFSIFLVSFAWGKDIVMEGLSGYHNFFVMDGFKFGVLVFIFSEFMFFFGIFWTFFDAALVPAHDVGGVWSPIGMHLVNPFGVPLLNTIILLSSGVSVTWAHYSLLSNKGCANSLMLTCILAVYFTGIQLMEYKEASFSISDGIFGSIFYLSTGFHGVHVLFGGLFLFFNLLRLLMSHFNYNHHLGLEFAIIYWHFVDVVWLFLFVFVYWWSY</sequence>
<keyword id="KW-0472">Membrane</keyword>
<keyword id="KW-0496">Mitochondrion</keyword>
<keyword id="KW-0999">Mitochondrion inner membrane</keyword>
<keyword id="KW-1278">Translocase</keyword>
<keyword id="KW-0812">Transmembrane</keyword>
<keyword id="KW-1133">Transmembrane helix</keyword>
<organism>
    <name type="scientific">Ascaris suum</name>
    <name type="common">Pig roundworm</name>
    <name type="synonym">Ascaris lumbricoides</name>
    <dbReference type="NCBI Taxonomy" id="6253"/>
    <lineage>
        <taxon>Eukaryota</taxon>
        <taxon>Metazoa</taxon>
        <taxon>Ecdysozoa</taxon>
        <taxon>Nematoda</taxon>
        <taxon>Chromadorea</taxon>
        <taxon>Rhabditida</taxon>
        <taxon>Spirurina</taxon>
        <taxon>Ascaridomorpha</taxon>
        <taxon>Ascaridoidea</taxon>
        <taxon>Ascarididae</taxon>
        <taxon>Ascaris</taxon>
    </lineage>
</organism>
<protein>
    <recommendedName>
        <fullName>Cytochrome c oxidase subunit 3</fullName>
        <ecNumber>7.1.1.9</ecNumber>
    </recommendedName>
    <alternativeName>
        <fullName>Cytochrome c oxidase polypeptide III</fullName>
    </alternativeName>
</protein>
<gene>
    <name type="primary">COIII</name>
</gene>
<name>COX3_ASCSU</name>
<reference key="1">
    <citation type="journal article" date="1992" name="Genetics">
        <title>The mitochondrial genomes of two nematodes, Caenorhabditis elegans and Ascaris suum.</title>
        <authorList>
            <person name="Okimoto R."/>
            <person name="Macfarlane J.L."/>
            <person name="Clary D.O."/>
            <person name="Wolstenholme D.R."/>
        </authorList>
    </citation>
    <scope>NUCLEOTIDE SEQUENCE [GENOMIC DNA]</scope>
    <source>
        <tissue>Body wall muscle</tissue>
        <tissue>Egg</tissue>
    </source>
</reference>
<feature type="chain" id="PRO_0000183741" description="Cytochrome c oxidase subunit 3">
    <location>
        <begin position="1"/>
        <end position="255"/>
    </location>
</feature>
<feature type="transmembrane region" description="Helical" evidence="2">
    <location>
        <begin position="12"/>
        <end position="32"/>
    </location>
</feature>
<feature type="transmembrane region" description="Helical" evidence="2">
    <location>
        <begin position="35"/>
        <end position="55"/>
    </location>
</feature>
<feature type="transmembrane region" description="Helical" evidence="2">
    <location>
        <begin position="77"/>
        <end position="97"/>
    </location>
</feature>
<feature type="transmembrane region" description="Helical" evidence="2">
    <location>
        <begin position="114"/>
        <end position="134"/>
    </location>
</feature>
<feature type="transmembrane region" description="Helical" evidence="2">
    <location>
        <begin position="153"/>
        <end position="173"/>
    </location>
</feature>
<feature type="transmembrane region" description="Helical" evidence="2">
    <location>
        <begin position="190"/>
        <end position="210"/>
    </location>
</feature>
<feature type="transmembrane region" description="Helical" evidence="2">
    <location>
        <begin position="231"/>
        <end position="251"/>
    </location>
</feature>